<accession>B1LLW7</accession>
<reference key="1">
    <citation type="journal article" date="2008" name="J. Bacteriol.">
        <title>Insights into the environmental resistance gene pool from the genome sequence of the multidrug-resistant environmental isolate Escherichia coli SMS-3-5.</title>
        <authorList>
            <person name="Fricke W.F."/>
            <person name="Wright M.S."/>
            <person name="Lindell A.H."/>
            <person name="Harkins D.M."/>
            <person name="Baker-Austin C."/>
            <person name="Ravel J."/>
            <person name="Stepanauskas R."/>
        </authorList>
    </citation>
    <scope>NUCLEOTIDE SEQUENCE [LARGE SCALE GENOMIC DNA]</scope>
    <source>
        <strain>SMS-3-5 / SECEC</strain>
    </source>
</reference>
<organism>
    <name type="scientific">Escherichia coli (strain SMS-3-5 / SECEC)</name>
    <dbReference type="NCBI Taxonomy" id="439855"/>
    <lineage>
        <taxon>Bacteria</taxon>
        <taxon>Pseudomonadati</taxon>
        <taxon>Pseudomonadota</taxon>
        <taxon>Gammaproteobacteria</taxon>
        <taxon>Enterobacterales</taxon>
        <taxon>Enterobacteriaceae</taxon>
        <taxon>Escherichia</taxon>
    </lineage>
</organism>
<proteinExistence type="inferred from homology"/>
<keyword id="KW-0997">Cell inner membrane</keyword>
<keyword id="KW-1003">Cell membrane</keyword>
<keyword id="KW-0472">Membrane</keyword>
<keyword id="KW-0812">Transmembrane</keyword>
<keyword id="KW-1133">Transmembrane helix</keyword>
<name>WZYE_ECOSM</name>
<gene>
    <name evidence="1" type="primary">wzyE</name>
    <name type="ordered locus">EcSMS35_4158</name>
</gene>
<dbReference type="EMBL" id="CP000970">
    <property type="protein sequence ID" value="ACB19844.1"/>
    <property type="molecule type" value="Genomic_DNA"/>
</dbReference>
<dbReference type="RefSeq" id="WP_000055119.1">
    <property type="nucleotide sequence ID" value="NC_010498.1"/>
</dbReference>
<dbReference type="KEGG" id="ecm:EcSMS35_4158"/>
<dbReference type="HOGENOM" id="CLU_049711_0_0_6"/>
<dbReference type="UniPathway" id="UPA00566"/>
<dbReference type="Proteomes" id="UP000007011">
    <property type="component" value="Chromosome"/>
</dbReference>
<dbReference type="GO" id="GO:0005886">
    <property type="term" value="C:plasma membrane"/>
    <property type="evidence" value="ECO:0007669"/>
    <property type="project" value="UniProtKB-SubCell"/>
</dbReference>
<dbReference type="GO" id="GO:0009246">
    <property type="term" value="P:enterobacterial common antigen biosynthetic process"/>
    <property type="evidence" value="ECO:0007669"/>
    <property type="project" value="UniProtKB-UniRule"/>
</dbReference>
<dbReference type="HAMAP" id="MF_01003">
    <property type="entry name" value="WzyE"/>
    <property type="match status" value="1"/>
</dbReference>
<dbReference type="InterPro" id="IPR010691">
    <property type="entry name" value="WzyE"/>
</dbReference>
<dbReference type="NCBIfam" id="NF002820">
    <property type="entry name" value="PRK02975.1"/>
    <property type="match status" value="1"/>
</dbReference>
<dbReference type="Pfam" id="PF06899">
    <property type="entry name" value="WzyE"/>
    <property type="match status" value="1"/>
</dbReference>
<feature type="chain" id="PRO_1000200205" description="Probable ECA polymerase">
    <location>
        <begin position="1"/>
        <end position="450"/>
    </location>
</feature>
<feature type="transmembrane region" description="Helical" evidence="1">
    <location>
        <begin position="6"/>
        <end position="26"/>
    </location>
</feature>
<feature type="transmembrane region" description="Helical" evidence="1">
    <location>
        <begin position="37"/>
        <end position="57"/>
    </location>
</feature>
<feature type="transmembrane region" description="Helical" evidence="1">
    <location>
        <begin position="63"/>
        <end position="83"/>
    </location>
</feature>
<feature type="transmembrane region" description="Helical" evidence="1">
    <location>
        <begin position="118"/>
        <end position="138"/>
    </location>
</feature>
<feature type="transmembrane region" description="Helical" evidence="1">
    <location>
        <begin position="155"/>
        <end position="175"/>
    </location>
</feature>
<feature type="transmembrane region" description="Helical" evidence="1">
    <location>
        <begin position="181"/>
        <end position="201"/>
    </location>
</feature>
<feature type="transmembrane region" description="Helical" evidence="1">
    <location>
        <begin position="207"/>
        <end position="227"/>
    </location>
</feature>
<feature type="transmembrane region" description="Helical" evidence="1">
    <location>
        <begin position="228"/>
        <end position="248"/>
    </location>
</feature>
<feature type="transmembrane region" description="Helical" evidence="1">
    <location>
        <begin position="341"/>
        <end position="361"/>
    </location>
</feature>
<feature type="transmembrane region" description="Helical" evidence="1">
    <location>
        <begin position="378"/>
        <end position="398"/>
    </location>
</feature>
<feature type="transmembrane region" description="Helical" evidence="1">
    <location>
        <begin position="410"/>
        <end position="430"/>
    </location>
</feature>
<protein>
    <recommendedName>
        <fullName evidence="1">Probable ECA polymerase</fullName>
    </recommendedName>
</protein>
<evidence type="ECO:0000255" key="1">
    <source>
        <dbReference type="HAMAP-Rule" id="MF_01003"/>
    </source>
</evidence>
<comment type="function">
    <text evidence="1">Probably involved in the polymerization of enterobacterial common antigen (ECA) trisaccharide repeat units.</text>
</comment>
<comment type="pathway">
    <text evidence="1">Bacterial outer membrane biogenesis; enterobacterial common antigen biosynthesis.</text>
</comment>
<comment type="subunit">
    <text evidence="1">Probably part of a complex composed of WzxE, WzyE and WzzE.</text>
</comment>
<comment type="subcellular location">
    <subcellularLocation>
        <location evidence="1">Cell inner membrane</location>
        <topology evidence="1">Multi-pass membrane protein</topology>
    </subcellularLocation>
</comment>
<comment type="similarity">
    <text evidence="1">Belongs to the WzyE family.</text>
</comment>
<sequence>MSLLQFSGLFVVWLLCTLFIATLTWFEFRRVRFNFNVFFSLLFLLTFFFGFPLTSVLVFRFDVGVAPPEILLQALLSAGCFYAVYYVTYKTRLRKRVADAPRRPLFTMNRVETNLTWVILMGIALVSVGIFFMHNGFLLFRLNSYSQIFSSEVSGVALKRFFYFFIPAMLVVYFLRQDSKAWLFFLVSTVAFGLLTYMIVGGTRANIIIAFAIFLFIGIIRGWISLWMLAAAGVLGIVGMFWLALKRYGMNVSGDEAFYTFLYLTRDTFSPWENLALLLQNYDNIDFQGLAPIVRDFYVFIPSWLWPGRPSMVLNSANYFTWEVLNNHSGLAISPTLIGSLVVMGGALFIPLGAIVVGLIIKWFDWLYELGNRETNRYKAAILHSFCFGAIFNMIVLAREGLDSFVSRVVFFIVVFGACLMIAKLLYWLFESAGLIHKRTKSSLRTQVEG</sequence>